<gene>
    <name evidence="1" type="primary">mdtJ</name>
    <name type="ordered locus">YPN_1545</name>
    <name type="ORF">YP516_1716</name>
</gene>
<protein>
    <recommendedName>
        <fullName evidence="1">Spermidine export protein MdtJ</fullName>
    </recommendedName>
</protein>
<organism>
    <name type="scientific">Yersinia pestis bv. Antiqua (strain Nepal516)</name>
    <dbReference type="NCBI Taxonomy" id="377628"/>
    <lineage>
        <taxon>Bacteria</taxon>
        <taxon>Pseudomonadati</taxon>
        <taxon>Pseudomonadota</taxon>
        <taxon>Gammaproteobacteria</taxon>
        <taxon>Enterobacterales</taxon>
        <taxon>Yersiniaceae</taxon>
        <taxon>Yersinia</taxon>
    </lineage>
</organism>
<evidence type="ECO:0000255" key="1">
    <source>
        <dbReference type="HAMAP-Rule" id="MF_01598"/>
    </source>
</evidence>
<evidence type="ECO:0000256" key="2">
    <source>
        <dbReference type="SAM" id="MobiDB-lite"/>
    </source>
</evidence>
<feature type="chain" id="PRO_0000331188" description="Spermidine export protein MdtJ">
    <location>
        <begin position="1"/>
        <end position="147"/>
    </location>
</feature>
<feature type="transmembrane region" description="Helical" evidence="1">
    <location>
        <begin position="1"/>
        <end position="21"/>
    </location>
</feature>
<feature type="transmembrane region" description="Helical" evidence="1">
    <location>
        <begin position="31"/>
        <end position="51"/>
    </location>
</feature>
<feature type="transmembrane region" description="Helical" evidence="1">
    <location>
        <begin position="54"/>
        <end position="74"/>
    </location>
</feature>
<feature type="transmembrane region" description="Helical" evidence="1">
    <location>
        <begin position="81"/>
        <end position="101"/>
    </location>
</feature>
<feature type="region of interest" description="Disordered" evidence="2">
    <location>
        <begin position="105"/>
        <end position="147"/>
    </location>
</feature>
<proteinExistence type="inferred from homology"/>
<keyword id="KW-0997">Cell inner membrane</keyword>
<keyword id="KW-1003">Cell membrane</keyword>
<keyword id="KW-0472">Membrane</keyword>
<keyword id="KW-0812">Transmembrane</keyword>
<keyword id="KW-1133">Transmembrane helix</keyword>
<keyword id="KW-0813">Transport</keyword>
<dbReference type="EMBL" id="CP000305">
    <property type="protein sequence ID" value="ABG17875.1"/>
    <property type="molecule type" value="Genomic_DNA"/>
</dbReference>
<dbReference type="EMBL" id="ACNQ01000009">
    <property type="protein sequence ID" value="EEO76984.1"/>
    <property type="molecule type" value="Genomic_DNA"/>
</dbReference>
<dbReference type="RefSeq" id="WP_002211188.1">
    <property type="nucleotide sequence ID" value="NZ_ACNQ01000009.1"/>
</dbReference>
<dbReference type="SMR" id="Q1CJF5"/>
<dbReference type="GeneID" id="57976593"/>
<dbReference type="KEGG" id="ypn:YPN_1545"/>
<dbReference type="HOGENOM" id="CLU_133067_0_0_6"/>
<dbReference type="Proteomes" id="UP000008936">
    <property type="component" value="Chromosome"/>
</dbReference>
<dbReference type="GO" id="GO:0005886">
    <property type="term" value="C:plasma membrane"/>
    <property type="evidence" value="ECO:0007669"/>
    <property type="project" value="UniProtKB-SubCell"/>
</dbReference>
<dbReference type="GO" id="GO:0015199">
    <property type="term" value="F:amino-acid betaine transmembrane transporter activity"/>
    <property type="evidence" value="ECO:0007669"/>
    <property type="project" value="TreeGrafter"/>
</dbReference>
<dbReference type="GO" id="GO:0015297">
    <property type="term" value="F:antiporter activity"/>
    <property type="evidence" value="ECO:0007669"/>
    <property type="project" value="TreeGrafter"/>
</dbReference>
<dbReference type="GO" id="GO:0015220">
    <property type="term" value="F:choline transmembrane transporter activity"/>
    <property type="evidence" value="ECO:0007669"/>
    <property type="project" value="TreeGrafter"/>
</dbReference>
<dbReference type="GO" id="GO:0015606">
    <property type="term" value="F:spermidine transmembrane transporter activity"/>
    <property type="evidence" value="ECO:0007669"/>
    <property type="project" value="UniProtKB-UniRule"/>
</dbReference>
<dbReference type="GO" id="GO:0031460">
    <property type="term" value="P:glycine betaine transport"/>
    <property type="evidence" value="ECO:0007669"/>
    <property type="project" value="TreeGrafter"/>
</dbReference>
<dbReference type="FunFam" id="1.10.3730.20:FF:000001">
    <property type="entry name" value="Quaternary ammonium compound resistance transporter SugE"/>
    <property type="match status" value="1"/>
</dbReference>
<dbReference type="Gene3D" id="1.10.3730.20">
    <property type="match status" value="1"/>
</dbReference>
<dbReference type="HAMAP" id="MF_01598">
    <property type="entry name" value="MdtJ"/>
    <property type="match status" value="1"/>
</dbReference>
<dbReference type="InterPro" id="IPR000390">
    <property type="entry name" value="Small_drug/metabolite_transptr"/>
</dbReference>
<dbReference type="InterPro" id="IPR045324">
    <property type="entry name" value="Small_multidrug_res"/>
</dbReference>
<dbReference type="InterPro" id="IPR023740">
    <property type="entry name" value="Spermidine_export_MdtJ"/>
</dbReference>
<dbReference type="NCBIfam" id="NF007767">
    <property type="entry name" value="PRK10452.1"/>
    <property type="match status" value="1"/>
</dbReference>
<dbReference type="PANTHER" id="PTHR30561">
    <property type="entry name" value="SMR FAMILY PROTON-DEPENDENT DRUG EFFLUX TRANSPORTER SUGE"/>
    <property type="match status" value="1"/>
</dbReference>
<dbReference type="PANTHER" id="PTHR30561:SF2">
    <property type="entry name" value="SPERMIDINE EXPORT PROTEIN MDTJ"/>
    <property type="match status" value="1"/>
</dbReference>
<dbReference type="Pfam" id="PF00893">
    <property type="entry name" value="Multi_Drug_Res"/>
    <property type="match status" value="1"/>
</dbReference>
<dbReference type="SUPFAM" id="SSF103481">
    <property type="entry name" value="Multidrug resistance efflux transporter EmrE"/>
    <property type="match status" value="1"/>
</dbReference>
<name>MDTJ_YERPN</name>
<sequence length="147" mass="15852">MIYWIFLGLAIIAEIIGTLSMKYASVSGEMTGHIVMYFMITGSYVMLSLAVKKVALGVAYALWEGIGILIITIFSVMWFGETLSPLKIAGLVTLIGGILLVKSGTRKPKQPNCHRGNRPPSVQELKTQTTGHHKGVAVESGEHHAAA</sequence>
<accession>Q1CJF5</accession>
<accession>C4GSH4</accession>
<comment type="function">
    <text evidence="1">Catalyzes the excretion of spermidine.</text>
</comment>
<comment type="subunit">
    <text evidence="1">Forms a complex with MdtI.</text>
</comment>
<comment type="subcellular location">
    <subcellularLocation>
        <location evidence="1">Cell inner membrane</location>
        <topology evidence="1">Multi-pass membrane protein</topology>
    </subcellularLocation>
</comment>
<comment type="similarity">
    <text evidence="1">Belongs to the drug/metabolite transporter (DMT) superfamily. Small multidrug resistance (SMR) (TC 2.A.7.1) family. MdtJ subfamily.</text>
</comment>
<reference key="1">
    <citation type="journal article" date="2006" name="J. Bacteriol.">
        <title>Complete genome sequence of Yersinia pestis strains Antiqua and Nepal516: evidence of gene reduction in an emerging pathogen.</title>
        <authorList>
            <person name="Chain P.S.G."/>
            <person name="Hu P."/>
            <person name="Malfatti S.A."/>
            <person name="Radnedge L."/>
            <person name="Larimer F."/>
            <person name="Vergez L.M."/>
            <person name="Worsham P."/>
            <person name="Chu M.C."/>
            <person name="Andersen G.L."/>
        </authorList>
    </citation>
    <scope>NUCLEOTIDE SEQUENCE [LARGE SCALE GENOMIC DNA]</scope>
    <source>
        <strain>Nepal516</strain>
    </source>
</reference>
<reference key="2">
    <citation type="submission" date="2009-04" db="EMBL/GenBank/DDBJ databases">
        <title>Yersinia pestis Nepal516A whole genome shotgun sequencing project.</title>
        <authorList>
            <person name="Plunkett G. III"/>
            <person name="Anderson B.D."/>
            <person name="Baumler D.J."/>
            <person name="Burland V."/>
            <person name="Cabot E.L."/>
            <person name="Glasner J.D."/>
            <person name="Mau B."/>
            <person name="Neeno-Eckwall E."/>
            <person name="Perna N.T."/>
            <person name="Munk A.C."/>
            <person name="Tapia R."/>
            <person name="Green L.D."/>
            <person name="Rogers Y.C."/>
            <person name="Detter J.C."/>
            <person name="Bruce D.C."/>
            <person name="Brettin T.S."/>
        </authorList>
    </citation>
    <scope>NUCLEOTIDE SEQUENCE [LARGE SCALE GENOMIC DNA]</scope>
    <source>
        <strain>Nepal516</strain>
    </source>
</reference>